<reference key="1">
    <citation type="journal article" date="2003" name="Nat. Biotechnol.">
        <title>The genome sequence of the entomopathogenic bacterium Photorhabdus luminescens.</title>
        <authorList>
            <person name="Duchaud E."/>
            <person name="Rusniok C."/>
            <person name="Frangeul L."/>
            <person name="Buchrieser C."/>
            <person name="Givaudan A."/>
            <person name="Taourit S."/>
            <person name="Bocs S."/>
            <person name="Boursaux-Eude C."/>
            <person name="Chandler M."/>
            <person name="Charles J.-F."/>
            <person name="Dassa E."/>
            <person name="Derose R."/>
            <person name="Derzelle S."/>
            <person name="Freyssinet G."/>
            <person name="Gaudriault S."/>
            <person name="Medigue C."/>
            <person name="Lanois A."/>
            <person name="Powell K."/>
            <person name="Siguier P."/>
            <person name="Vincent R."/>
            <person name="Wingate V."/>
            <person name="Zouine M."/>
            <person name="Glaser P."/>
            <person name="Boemare N."/>
            <person name="Danchin A."/>
            <person name="Kunst F."/>
        </authorList>
    </citation>
    <scope>NUCLEOTIDE SEQUENCE [LARGE SCALE GENOMIC DNA]</scope>
    <source>
        <strain>DSM 15139 / CIP 105565 / TT01</strain>
    </source>
</reference>
<dbReference type="EC" id="3.5.4.4" evidence="1"/>
<dbReference type="EMBL" id="BX571866">
    <property type="protein sequence ID" value="CAE14655.1"/>
    <property type="molecule type" value="Genomic_DNA"/>
</dbReference>
<dbReference type="RefSeq" id="WP_011146598.1">
    <property type="nucleotide sequence ID" value="NC_005126.1"/>
</dbReference>
<dbReference type="SMR" id="Q7N4H5"/>
<dbReference type="STRING" id="243265.plu2362"/>
<dbReference type="GeneID" id="48848634"/>
<dbReference type="KEGG" id="plu:plu2362"/>
<dbReference type="eggNOG" id="COG1816">
    <property type="taxonomic scope" value="Bacteria"/>
</dbReference>
<dbReference type="HOGENOM" id="CLU_039228_0_2_6"/>
<dbReference type="OrthoDB" id="105475at2"/>
<dbReference type="Proteomes" id="UP000002514">
    <property type="component" value="Chromosome"/>
</dbReference>
<dbReference type="GO" id="GO:0005829">
    <property type="term" value="C:cytosol"/>
    <property type="evidence" value="ECO:0007669"/>
    <property type="project" value="TreeGrafter"/>
</dbReference>
<dbReference type="GO" id="GO:0046936">
    <property type="term" value="F:2'-deoxyadenosine deaminase activity"/>
    <property type="evidence" value="ECO:0007669"/>
    <property type="project" value="RHEA"/>
</dbReference>
<dbReference type="GO" id="GO:0004000">
    <property type="term" value="F:adenosine deaminase activity"/>
    <property type="evidence" value="ECO:0007669"/>
    <property type="project" value="UniProtKB-UniRule"/>
</dbReference>
<dbReference type="GO" id="GO:0008270">
    <property type="term" value="F:zinc ion binding"/>
    <property type="evidence" value="ECO:0007669"/>
    <property type="project" value="UniProtKB-UniRule"/>
</dbReference>
<dbReference type="GO" id="GO:0006154">
    <property type="term" value="P:adenosine catabolic process"/>
    <property type="evidence" value="ECO:0007669"/>
    <property type="project" value="TreeGrafter"/>
</dbReference>
<dbReference type="GO" id="GO:0043103">
    <property type="term" value="P:hypoxanthine salvage"/>
    <property type="evidence" value="ECO:0007669"/>
    <property type="project" value="TreeGrafter"/>
</dbReference>
<dbReference type="GO" id="GO:0046103">
    <property type="term" value="P:inosine biosynthetic process"/>
    <property type="evidence" value="ECO:0007669"/>
    <property type="project" value="TreeGrafter"/>
</dbReference>
<dbReference type="GO" id="GO:0009117">
    <property type="term" value="P:nucleotide metabolic process"/>
    <property type="evidence" value="ECO:0007669"/>
    <property type="project" value="UniProtKB-KW"/>
</dbReference>
<dbReference type="GO" id="GO:0009168">
    <property type="term" value="P:purine ribonucleoside monophosphate biosynthetic process"/>
    <property type="evidence" value="ECO:0007669"/>
    <property type="project" value="UniProtKB-UniRule"/>
</dbReference>
<dbReference type="CDD" id="cd01320">
    <property type="entry name" value="ADA"/>
    <property type="match status" value="1"/>
</dbReference>
<dbReference type="FunFam" id="3.20.20.140:FF:000009">
    <property type="entry name" value="Adenosine deaminase"/>
    <property type="match status" value="1"/>
</dbReference>
<dbReference type="Gene3D" id="3.20.20.140">
    <property type="entry name" value="Metal-dependent hydrolases"/>
    <property type="match status" value="1"/>
</dbReference>
<dbReference type="HAMAP" id="MF_00540">
    <property type="entry name" value="A_deaminase"/>
    <property type="match status" value="1"/>
</dbReference>
<dbReference type="InterPro" id="IPR006650">
    <property type="entry name" value="A/AMP_deam_AS"/>
</dbReference>
<dbReference type="InterPro" id="IPR028893">
    <property type="entry name" value="A_deaminase"/>
</dbReference>
<dbReference type="InterPro" id="IPR001365">
    <property type="entry name" value="A_deaminase_dom"/>
</dbReference>
<dbReference type="InterPro" id="IPR006330">
    <property type="entry name" value="Ado/ade_deaminase"/>
</dbReference>
<dbReference type="InterPro" id="IPR032466">
    <property type="entry name" value="Metal_Hydrolase"/>
</dbReference>
<dbReference type="NCBIfam" id="TIGR01430">
    <property type="entry name" value="aden_deam"/>
    <property type="match status" value="1"/>
</dbReference>
<dbReference type="NCBIfam" id="NF006846">
    <property type="entry name" value="PRK09358.1-1"/>
    <property type="match status" value="1"/>
</dbReference>
<dbReference type="PANTHER" id="PTHR11409">
    <property type="entry name" value="ADENOSINE DEAMINASE"/>
    <property type="match status" value="1"/>
</dbReference>
<dbReference type="PANTHER" id="PTHR11409:SF43">
    <property type="entry name" value="ADENOSINE DEAMINASE"/>
    <property type="match status" value="1"/>
</dbReference>
<dbReference type="Pfam" id="PF00962">
    <property type="entry name" value="A_deaminase"/>
    <property type="match status" value="1"/>
</dbReference>
<dbReference type="SUPFAM" id="SSF51556">
    <property type="entry name" value="Metallo-dependent hydrolases"/>
    <property type="match status" value="1"/>
</dbReference>
<dbReference type="PROSITE" id="PS00485">
    <property type="entry name" value="A_DEAMINASE"/>
    <property type="match status" value="1"/>
</dbReference>
<name>ADD_PHOLL</name>
<sequence>MIDIKLPLTDLHRHLDGNIRPETILDLANQHNIQLPANDLESLLPHVQIIENEPSLVSFLQKLDWGVAVLADLDACRRIAIENVEDAINTGLDYAELRFSPYYMAMNHKLPVEGVVEAIIDGIRSARQNNDIDIRLIGILSRTFGEQACTQELTSLLAHQQHITALDLAGDELGFPGHLFQSHFTKARDAGWHITIHAGEAAGAESIWQAIRELGATRIGHGVKAITDPVLMDYLVENRIGIETCLTSNLQTSTVNSLLDHPLKQFLEKDILASINTDDPAVEGIDIRHEYEIAAPAAGLSIAQIRQAQINGLETAFISDTEKQALRMKAANR</sequence>
<organism>
    <name type="scientific">Photorhabdus laumondii subsp. laumondii (strain DSM 15139 / CIP 105565 / TT01)</name>
    <name type="common">Photorhabdus luminescens subsp. laumondii</name>
    <dbReference type="NCBI Taxonomy" id="243265"/>
    <lineage>
        <taxon>Bacteria</taxon>
        <taxon>Pseudomonadati</taxon>
        <taxon>Pseudomonadota</taxon>
        <taxon>Gammaproteobacteria</taxon>
        <taxon>Enterobacterales</taxon>
        <taxon>Morganellaceae</taxon>
        <taxon>Photorhabdus</taxon>
    </lineage>
</organism>
<evidence type="ECO:0000255" key="1">
    <source>
        <dbReference type="HAMAP-Rule" id="MF_00540"/>
    </source>
</evidence>
<protein>
    <recommendedName>
        <fullName evidence="1">Adenosine deaminase</fullName>
        <ecNumber evidence="1">3.5.4.4</ecNumber>
    </recommendedName>
    <alternativeName>
        <fullName evidence="1">Adenosine aminohydrolase</fullName>
    </alternativeName>
</protein>
<feature type="chain" id="PRO_0000194376" description="Adenosine deaminase">
    <location>
        <begin position="1"/>
        <end position="333"/>
    </location>
</feature>
<feature type="active site" description="Proton donor" evidence="1">
    <location>
        <position position="200"/>
    </location>
</feature>
<feature type="binding site" evidence="1">
    <location>
        <position position="12"/>
    </location>
    <ligand>
        <name>Zn(2+)</name>
        <dbReference type="ChEBI" id="CHEBI:29105"/>
        <note>catalytic</note>
    </ligand>
</feature>
<feature type="binding site" evidence="1">
    <location>
        <position position="14"/>
    </location>
    <ligand>
        <name>substrate</name>
    </ligand>
</feature>
<feature type="binding site" evidence="1">
    <location>
        <position position="14"/>
    </location>
    <ligand>
        <name>Zn(2+)</name>
        <dbReference type="ChEBI" id="CHEBI:29105"/>
        <note>catalytic</note>
    </ligand>
</feature>
<feature type="binding site" evidence="1">
    <location>
        <position position="16"/>
    </location>
    <ligand>
        <name>substrate</name>
    </ligand>
</feature>
<feature type="binding site" evidence="1">
    <location>
        <position position="170"/>
    </location>
    <ligand>
        <name>substrate</name>
    </ligand>
</feature>
<feature type="binding site" evidence="1">
    <location>
        <position position="197"/>
    </location>
    <ligand>
        <name>Zn(2+)</name>
        <dbReference type="ChEBI" id="CHEBI:29105"/>
        <note>catalytic</note>
    </ligand>
</feature>
<feature type="binding site" evidence="1">
    <location>
        <position position="278"/>
    </location>
    <ligand>
        <name>Zn(2+)</name>
        <dbReference type="ChEBI" id="CHEBI:29105"/>
        <note>catalytic</note>
    </ligand>
</feature>
<feature type="binding site" evidence="1">
    <location>
        <position position="279"/>
    </location>
    <ligand>
        <name>substrate</name>
    </ligand>
</feature>
<feature type="site" description="Important for catalytic activity" evidence="1">
    <location>
        <position position="221"/>
    </location>
</feature>
<proteinExistence type="inferred from homology"/>
<gene>
    <name evidence="1" type="primary">add</name>
    <name type="ordered locus">plu2362</name>
</gene>
<accession>Q7N4H5</accession>
<keyword id="KW-0378">Hydrolase</keyword>
<keyword id="KW-0479">Metal-binding</keyword>
<keyword id="KW-0546">Nucleotide metabolism</keyword>
<keyword id="KW-1185">Reference proteome</keyword>
<keyword id="KW-0862">Zinc</keyword>
<comment type="function">
    <text evidence="1">Catalyzes the hydrolytic deamination of adenosine and 2-deoxyadenosine.</text>
</comment>
<comment type="catalytic activity">
    <reaction evidence="1">
        <text>adenosine + H2O + H(+) = inosine + NH4(+)</text>
        <dbReference type="Rhea" id="RHEA:24408"/>
        <dbReference type="ChEBI" id="CHEBI:15377"/>
        <dbReference type="ChEBI" id="CHEBI:15378"/>
        <dbReference type="ChEBI" id="CHEBI:16335"/>
        <dbReference type="ChEBI" id="CHEBI:17596"/>
        <dbReference type="ChEBI" id="CHEBI:28938"/>
        <dbReference type="EC" id="3.5.4.4"/>
    </reaction>
    <physiologicalReaction direction="left-to-right" evidence="1">
        <dbReference type="Rhea" id="RHEA:24409"/>
    </physiologicalReaction>
</comment>
<comment type="catalytic activity">
    <reaction evidence="1">
        <text>2'-deoxyadenosine + H2O + H(+) = 2'-deoxyinosine + NH4(+)</text>
        <dbReference type="Rhea" id="RHEA:28190"/>
        <dbReference type="ChEBI" id="CHEBI:15377"/>
        <dbReference type="ChEBI" id="CHEBI:15378"/>
        <dbReference type="ChEBI" id="CHEBI:17256"/>
        <dbReference type="ChEBI" id="CHEBI:28938"/>
        <dbReference type="ChEBI" id="CHEBI:28997"/>
        <dbReference type="EC" id="3.5.4.4"/>
    </reaction>
    <physiologicalReaction direction="left-to-right" evidence="1">
        <dbReference type="Rhea" id="RHEA:28191"/>
    </physiologicalReaction>
</comment>
<comment type="cofactor">
    <cofactor evidence="1">
        <name>Zn(2+)</name>
        <dbReference type="ChEBI" id="CHEBI:29105"/>
    </cofactor>
    <text evidence="1">Binds 1 zinc ion per subunit.</text>
</comment>
<comment type="similarity">
    <text evidence="1">Belongs to the metallo-dependent hydrolases superfamily. Adenosine and AMP deaminases family. Adenosine deaminase subfamily.</text>
</comment>